<sequence length="206" mass="23874">MAKIIGISGGSGSGKTTVVSKISEFIPEFVLISQDNYYKSVGDYEHEFSKVNFDHPDAFDNNLFYEHLKNLKKNSPIDMPLYDFINHKRQLKTVLVVPTPVVIVEGIMIFVEERVRNLIDLKIYIDTPNDIRFIRRLRRDISKRGRTVESVIDQYLNTTRWGYYRFIEPTKEYADLIIPEGGHNDKALYVLSTFLKSLSKEGLDFT</sequence>
<feature type="initiator methionine" description="Removed" evidence="3">
    <location>
        <position position="1"/>
    </location>
</feature>
<feature type="chain" id="PRO_0000164465" description="Uridine kinase">
    <location>
        <begin position="2"/>
        <end position="206"/>
    </location>
</feature>
<feature type="binding site" evidence="2">
    <location>
        <begin position="9"/>
        <end position="16"/>
    </location>
    <ligand>
        <name>ATP</name>
        <dbReference type="ChEBI" id="CHEBI:30616"/>
    </ligand>
</feature>
<keyword id="KW-0067">ATP-binding</keyword>
<keyword id="KW-0963">Cytoplasm</keyword>
<keyword id="KW-0903">Direct protein sequencing</keyword>
<keyword id="KW-0418">Kinase</keyword>
<keyword id="KW-0547">Nucleotide-binding</keyword>
<keyword id="KW-1185">Reference proteome</keyword>
<keyword id="KW-0808">Transferase</keyword>
<comment type="catalytic activity">
    <reaction>
        <text>uridine + ATP = UMP + ADP + H(+)</text>
        <dbReference type="Rhea" id="RHEA:16825"/>
        <dbReference type="ChEBI" id="CHEBI:15378"/>
        <dbReference type="ChEBI" id="CHEBI:16704"/>
        <dbReference type="ChEBI" id="CHEBI:30616"/>
        <dbReference type="ChEBI" id="CHEBI:57865"/>
        <dbReference type="ChEBI" id="CHEBI:456216"/>
        <dbReference type="EC" id="2.7.1.48"/>
    </reaction>
</comment>
<comment type="catalytic activity">
    <reaction>
        <text>cytidine + ATP = CMP + ADP + H(+)</text>
        <dbReference type="Rhea" id="RHEA:24674"/>
        <dbReference type="ChEBI" id="CHEBI:15378"/>
        <dbReference type="ChEBI" id="CHEBI:17562"/>
        <dbReference type="ChEBI" id="CHEBI:30616"/>
        <dbReference type="ChEBI" id="CHEBI:60377"/>
        <dbReference type="ChEBI" id="CHEBI:456216"/>
        <dbReference type="EC" id="2.7.1.48"/>
    </reaction>
</comment>
<comment type="pathway">
    <text>Pyrimidine metabolism; CTP biosynthesis via salvage pathway; CTP from cytidine: step 1/3.</text>
</comment>
<comment type="pathway">
    <text>Pyrimidine metabolism; UMP biosynthesis via salvage pathway; UMP from uridine: step 1/1.</text>
</comment>
<comment type="subunit">
    <text>Monomer.</text>
</comment>
<comment type="subcellular location">
    <subcellularLocation>
        <location evidence="1">Cytoplasm</location>
    </subcellularLocation>
</comment>
<comment type="similarity">
    <text evidence="4">Belongs to the uridine kinase family.</text>
</comment>
<evidence type="ECO:0000250" key="1"/>
<evidence type="ECO:0000255" key="2"/>
<evidence type="ECO:0000269" key="3">
    <source>
    </source>
</evidence>
<evidence type="ECO:0000305" key="4"/>
<accession>Q59190</accession>
<organism>
    <name type="scientific">Borreliella burgdorferi (strain ATCC 35210 / DSM 4680 / CIP 102532 / B31)</name>
    <name type="common">Borrelia burgdorferi</name>
    <dbReference type="NCBI Taxonomy" id="224326"/>
    <lineage>
        <taxon>Bacteria</taxon>
        <taxon>Pseudomonadati</taxon>
        <taxon>Spirochaetota</taxon>
        <taxon>Spirochaetia</taxon>
        <taxon>Spirochaetales</taxon>
        <taxon>Borreliaceae</taxon>
        <taxon>Borreliella</taxon>
    </lineage>
</organism>
<gene>
    <name type="primary">udk</name>
    <name type="ordered locus">BB_0015</name>
</gene>
<reference key="1">
    <citation type="journal article" date="1997" name="FEMS Microbiol. Lett.">
        <title>Borrelia burgdorferi uridine kinase: an enzyme of the pyrimidine salvage pathway for endogenous use of nucleotides.</title>
        <authorList>
            <person name="Boursaux-Eude C."/>
            <person name="Margarita D."/>
            <person name="Gilles A.M."/>
            <person name="Barzu O."/>
            <person name="Saint-Girons I."/>
        </authorList>
    </citation>
    <scope>NUCLEOTIDE SEQUENCE [GENOMIC DNA]</scope>
    <scope>PROTEIN SEQUENCE OF 2-5</scope>
    <source>
        <strain>HB19</strain>
    </source>
</reference>
<reference key="2">
    <citation type="journal article" date="1997" name="Nature">
        <title>Genomic sequence of a Lyme disease spirochaete, Borrelia burgdorferi.</title>
        <authorList>
            <person name="Fraser C.M."/>
            <person name="Casjens S."/>
            <person name="Huang W.M."/>
            <person name="Sutton G.G."/>
            <person name="Clayton R.A."/>
            <person name="Lathigra R."/>
            <person name="White O."/>
            <person name="Ketchum K.A."/>
            <person name="Dodson R.J."/>
            <person name="Hickey E.K."/>
            <person name="Gwinn M.L."/>
            <person name="Dougherty B.A."/>
            <person name="Tomb J.-F."/>
            <person name="Fleischmann R.D."/>
            <person name="Richardson D.L."/>
            <person name="Peterson J.D."/>
            <person name="Kerlavage A.R."/>
            <person name="Quackenbush J."/>
            <person name="Salzberg S.L."/>
            <person name="Hanson M."/>
            <person name="van Vugt R."/>
            <person name="Palmer N."/>
            <person name="Adams M.D."/>
            <person name="Gocayne J.D."/>
            <person name="Weidman J.F."/>
            <person name="Utterback T.R."/>
            <person name="Watthey L."/>
            <person name="McDonald L.A."/>
            <person name="Artiach P."/>
            <person name="Bowman C."/>
            <person name="Garland S.A."/>
            <person name="Fujii C."/>
            <person name="Cotton M.D."/>
            <person name="Horst K."/>
            <person name="Roberts K.M."/>
            <person name="Hatch B."/>
            <person name="Smith H.O."/>
            <person name="Venter J.C."/>
        </authorList>
    </citation>
    <scope>NUCLEOTIDE SEQUENCE [LARGE SCALE GENOMIC DNA]</scope>
    <source>
        <strain>ATCC 35210 / DSM 4680 / CIP 102532 / B31</strain>
    </source>
</reference>
<protein>
    <recommendedName>
        <fullName>Uridine kinase</fullName>
        <ecNumber>2.7.1.48</ecNumber>
    </recommendedName>
    <alternativeName>
        <fullName>Cytidine monophosphokinase</fullName>
    </alternativeName>
    <alternativeName>
        <fullName>Uridine monophosphokinase</fullName>
    </alternativeName>
</protein>
<proteinExistence type="evidence at protein level"/>
<name>URK_BORBU</name>
<dbReference type="EC" id="2.7.1.48"/>
<dbReference type="EMBL" id="X97449">
    <property type="protein sequence ID" value="CAA66081.1"/>
    <property type="molecule type" value="Genomic_DNA"/>
</dbReference>
<dbReference type="EMBL" id="AE000783">
    <property type="protein sequence ID" value="AAC66392.2"/>
    <property type="molecule type" value="Genomic_DNA"/>
</dbReference>
<dbReference type="PIR" id="G70101">
    <property type="entry name" value="G70101"/>
</dbReference>
<dbReference type="RefSeq" id="NP_212149.2">
    <property type="nucleotide sequence ID" value="NC_001318.1"/>
</dbReference>
<dbReference type="RefSeq" id="WP_002655979.1">
    <property type="nucleotide sequence ID" value="NC_001318.1"/>
</dbReference>
<dbReference type="SMR" id="Q59190"/>
<dbReference type="STRING" id="224326.BB_0015"/>
<dbReference type="PaxDb" id="224326-BB_0015"/>
<dbReference type="EnsemblBacteria" id="AAC66392">
    <property type="protein sequence ID" value="AAC66392"/>
    <property type="gene ID" value="BB_0015"/>
</dbReference>
<dbReference type="GeneID" id="56568200"/>
<dbReference type="KEGG" id="bbu:BB_0015"/>
<dbReference type="PATRIC" id="fig|224326.49.peg.413"/>
<dbReference type="HOGENOM" id="CLU_021278_1_2_12"/>
<dbReference type="OrthoDB" id="9777642at2"/>
<dbReference type="UniPathway" id="UPA00574">
    <property type="reaction ID" value="UER00637"/>
</dbReference>
<dbReference type="UniPathway" id="UPA00579">
    <property type="reaction ID" value="UER00640"/>
</dbReference>
<dbReference type="Proteomes" id="UP000001807">
    <property type="component" value="Chromosome"/>
</dbReference>
<dbReference type="GO" id="GO:0005737">
    <property type="term" value="C:cytoplasm"/>
    <property type="evidence" value="ECO:0007669"/>
    <property type="project" value="UniProtKB-SubCell"/>
</dbReference>
<dbReference type="GO" id="GO:0005524">
    <property type="term" value="F:ATP binding"/>
    <property type="evidence" value="ECO:0007669"/>
    <property type="project" value="UniProtKB-UniRule"/>
</dbReference>
<dbReference type="GO" id="GO:0043771">
    <property type="term" value="F:cytidine kinase activity"/>
    <property type="evidence" value="ECO:0007669"/>
    <property type="project" value="RHEA"/>
</dbReference>
<dbReference type="GO" id="GO:0004849">
    <property type="term" value="F:uridine kinase activity"/>
    <property type="evidence" value="ECO:0007669"/>
    <property type="project" value="UniProtKB-UniRule"/>
</dbReference>
<dbReference type="GO" id="GO:0044211">
    <property type="term" value="P:CTP salvage"/>
    <property type="evidence" value="ECO:0007669"/>
    <property type="project" value="UniProtKB-UniRule"/>
</dbReference>
<dbReference type="GO" id="GO:0044206">
    <property type="term" value="P:UMP salvage"/>
    <property type="evidence" value="ECO:0007669"/>
    <property type="project" value="UniProtKB-UniRule"/>
</dbReference>
<dbReference type="CDD" id="cd02023">
    <property type="entry name" value="UMPK"/>
    <property type="match status" value="1"/>
</dbReference>
<dbReference type="Gene3D" id="3.40.50.300">
    <property type="entry name" value="P-loop containing nucleotide triphosphate hydrolases"/>
    <property type="match status" value="1"/>
</dbReference>
<dbReference type="HAMAP" id="MF_00551">
    <property type="entry name" value="Uridine_kinase"/>
    <property type="match status" value="1"/>
</dbReference>
<dbReference type="InterPro" id="IPR027417">
    <property type="entry name" value="P-loop_NTPase"/>
</dbReference>
<dbReference type="InterPro" id="IPR006083">
    <property type="entry name" value="PRK/URK"/>
</dbReference>
<dbReference type="InterPro" id="IPR026008">
    <property type="entry name" value="Uridine_kinase"/>
</dbReference>
<dbReference type="InterPro" id="IPR000764">
    <property type="entry name" value="Uridine_kinase-like"/>
</dbReference>
<dbReference type="NCBIfam" id="NF004018">
    <property type="entry name" value="PRK05480.1"/>
    <property type="match status" value="1"/>
</dbReference>
<dbReference type="NCBIfam" id="TIGR00235">
    <property type="entry name" value="udk"/>
    <property type="match status" value="1"/>
</dbReference>
<dbReference type="PANTHER" id="PTHR10285">
    <property type="entry name" value="URIDINE KINASE"/>
    <property type="match status" value="1"/>
</dbReference>
<dbReference type="Pfam" id="PF00485">
    <property type="entry name" value="PRK"/>
    <property type="match status" value="1"/>
</dbReference>
<dbReference type="PRINTS" id="PR00988">
    <property type="entry name" value="URIDINKINASE"/>
</dbReference>
<dbReference type="SUPFAM" id="SSF52540">
    <property type="entry name" value="P-loop containing nucleoside triphosphate hydrolases"/>
    <property type="match status" value="1"/>
</dbReference>